<dbReference type="EMBL" id="CU928160">
    <property type="protein sequence ID" value="CAQ98625.1"/>
    <property type="molecule type" value="Genomic_DNA"/>
</dbReference>
<dbReference type="RefSeq" id="WP_001229265.1">
    <property type="nucleotide sequence ID" value="NC_011741.1"/>
</dbReference>
<dbReference type="SMR" id="B7M1C1"/>
<dbReference type="GeneID" id="93775925"/>
<dbReference type="KEGG" id="ecr:ECIAI1_1768"/>
<dbReference type="HOGENOM" id="CLU_105066_1_3_6"/>
<dbReference type="GO" id="GO:0005829">
    <property type="term" value="C:cytosol"/>
    <property type="evidence" value="ECO:0007669"/>
    <property type="project" value="TreeGrafter"/>
</dbReference>
<dbReference type="GO" id="GO:0003677">
    <property type="term" value="F:DNA binding"/>
    <property type="evidence" value="ECO:0007669"/>
    <property type="project" value="UniProtKB-UniRule"/>
</dbReference>
<dbReference type="GO" id="GO:0030527">
    <property type="term" value="F:structural constituent of chromatin"/>
    <property type="evidence" value="ECO:0007669"/>
    <property type="project" value="InterPro"/>
</dbReference>
<dbReference type="GO" id="GO:0006310">
    <property type="term" value="P:DNA recombination"/>
    <property type="evidence" value="ECO:0007669"/>
    <property type="project" value="UniProtKB-UniRule"/>
</dbReference>
<dbReference type="GO" id="GO:0009893">
    <property type="term" value="P:positive regulation of metabolic process"/>
    <property type="evidence" value="ECO:0007669"/>
    <property type="project" value="UniProtKB-ARBA"/>
</dbReference>
<dbReference type="GO" id="GO:0006355">
    <property type="term" value="P:regulation of DNA-templated transcription"/>
    <property type="evidence" value="ECO:0007669"/>
    <property type="project" value="UniProtKB-UniRule"/>
</dbReference>
<dbReference type="GO" id="GO:0006417">
    <property type="term" value="P:regulation of translation"/>
    <property type="evidence" value="ECO:0007669"/>
    <property type="project" value="UniProtKB-UniRule"/>
</dbReference>
<dbReference type="CDD" id="cd13835">
    <property type="entry name" value="IHF_A"/>
    <property type="match status" value="1"/>
</dbReference>
<dbReference type="FunFam" id="4.10.520.10:FF:000002">
    <property type="entry name" value="Integration host factor subunit alpha"/>
    <property type="match status" value="1"/>
</dbReference>
<dbReference type="Gene3D" id="4.10.520.10">
    <property type="entry name" value="IHF-like DNA-binding proteins"/>
    <property type="match status" value="1"/>
</dbReference>
<dbReference type="HAMAP" id="MF_00380">
    <property type="entry name" value="IHF_alpha"/>
    <property type="match status" value="1"/>
</dbReference>
<dbReference type="InterPro" id="IPR000119">
    <property type="entry name" value="Hist_DNA-bd"/>
</dbReference>
<dbReference type="InterPro" id="IPR020816">
    <property type="entry name" value="Histone-like_DNA-bd_CS"/>
</dbReference>
<dbReference type="InterPro" id="IPR010992">
    <property type="entry name" value="IHF-like_DNA-bd_dom_sf"/>
</dbReference>
<dbReference type="InterPro" id="IPR005684">
    <property type="entry name" value="IHF_alpha"/>
</dbReference>
<dbReference type="NCBIfam" id="TIGR00987">
    <property type="entry name" value="himA"/>
    <property type="match status" value="1"/>
</dbReference>
<dbReference type="NCBIfam" id="NF001401">
    <property type="entry name" value="PRK00285.1"/>
    <property type="match status" value="1"/>
</dbReference>
<dbReference type="PANTHER" id="PTHR33175">
    <property type="entry name" value="DNA-BINDING PROTEIN HU"/>
    <property type="match status" value="1"/>
</dbReference>
<dbReference type="PANTHER" id="PTHR33175:SF2">
    <property type="entry name" value="INTEGRATION HOST FACTOR SUBUNIT ALPHA"/>
    <property type="match status" value="1"/>
</dbReference>
<dbReference type="Pfam" id="PF00216">
    <property type="entry name" value="Bac_DNA_binding"/>
    <property type="match status" value="1"/>
</dbReference>
<dbReference type="PRINTS" id="PR01727">
    <property type="entry name" value="DNABINDINGHU"/>
</dbReference>
<dbReference type="SMART" id="SM00411">
    <property type="entry name" value="BHL"/>
    <property type="match status" value="1"/>
</dbReference>
<dbReference type="SUPFAM" id="SSF47729">
    <property type="entry name" value="IHF-like DNA-binding proteins"/>
    <property type="match status" value="1"/>
</dbReference>
<dbReference type="PROSITE" id="PS00045">
    <property type="entry name" value="HISTONE_LIKE"/>
    <property type="match status" value="1"/>
</dbReference>
<evidence type="ECO:0000255" key="1">
    <source>
        <dbReference type="HAMAP-Rule" id="MF_00380"/>
    </source>
</evidence>
<evidence type="ECO:0000256" key="2">
    <source>
        <dbReference type="SAM" id="MobiDB-lite"/>
    </source>
</evidence>
<keyword id="KW-0233">DNA recombination</keyword>
<keyword id="KW-0238">DNA-binding</keyword>
<keyword id="KW-0804">Transcription</keyword>
<keyword id="KW-0805">Transcription regulation</keyword>
<keyword id="KW-0810">Translation regulation</keyword>
<name>IHFA_ECO8A</name>
<organism>
    <name type="scientific">Escherichia coli O8 (strain IAI1)</name>
    <dbReference type="NCBI Taxonomy" id="585034"/>
    <lineage>
        <taxon>Bacteria</taxon>
        <taxon>Pseudomonadati</taxon>
        <taxon>Pseudomonadota</taxon>
        <taxon>Gammaproteobacteria</taxon>
        <taxon>Enterobacterales</taxon>
        <taxon>Enterobacteriaceae</taxon>
        <taxon>Escherichia</taxon>
    </lineage>
</organism>
<reference key="1">
    <citation type="journal article" date="2009" name="PLoS Genet.">
        <title>Organised genome dynamics in the Escherichia coli species results in highly diverse adaptive paths.</title>
        <authorList>
            <person name="Touchon M."/>
            <person name="Hoede C."/>
            <person name="Tenaillon O."/>
            <person name="Barbe V."/>
            <person name="Baeriswyl S."/>
            <person name="Bidet P."/>
            <person name="Bingen E."/>
            <person name="Bonacorsi S."/>
            <person name="Bouchier C."/>
            <person name="Bouvet O."/>
            <person name="Calteau A."/>
            <person name="Chiapello H."/>
            <person name="Clermont O."/>
            <person name="Cruveiller S."/>
            <person name="Danchin A."/>
            <person name="Diard M."/>
            <person name="Dossat C."/>
            <person name="Karoui M.E."/>
            <person name="Frapy E."/>
            <person name="Garry L."/>
            <person name="Ghigo J.M."/>
            <person name="Gilles A.M."/>
            <person name="Johnson J."/>
            <person name="Le Bouguenec C."/>
            <person name="Lescat M."/>
            <person name="Mangenot S."/>
            <person name="Martinez-Jehanne V."/>
            <person name="Matic I."/>
            <person name="Nassif X."/>
            <person name="Oztas S."/>
            <person name="Petit M.A."/>
            <person name="Pichon C."/>
            <person name="Rouy Z."/>
            <person name="Ruf C.S."/>
            <person name="Schneider D."/>
            <person name="Tourret J."/>
            <person name="Vacherie B."/>
            <person name="Vallenet D."/>
            <person name="Medigue C."/>
            <person name="Rocha E.P.C."/>
            <person name="Denamur E."/>
        </authorList>
    </citation>
    <scope>NUCLEOTIDE SEQUENCE [LARGE SCALE GENOMIC DNA]</scope>
    <source>
        <strain>IAI1</strain>
    </source>
</reference>
<protein>
    <recommendedName>
        <fullName evidence="1">Integration host factor subunit alpha</fullName>
        <shortName evidence="1">IHF-alpha</shortName>
    </recommendedName>
</protein>
<gene>
    <name evidence="1" type="primary">ihfA</name>
    <name evidence="1" type="synonym">himA</name>
    <name type="ordered locus">ECIAI1_1768</name>
</gene>
<proteinExistence type="inferred from homology"/>
<accession>B7M1C1</accession>
<feature type="chain" id="PRO_1000122137" description="Integration host factor subunit alpha">
    <location>
        <begin position="1"/>
        <end position="99"/>
    </location>
</feature>
<feature type="region of interest" description="Disordered" evidence="2">
    <location>
        <begin position="49"/>
        <end position="73"/>
    </location>
</feature>
<comment type="function">
    <text evidence="1">This protein is one of the two subunits of integration host factor, a specific DNA-binding protein that functions in genetic recombination as well as in transcriptional and translational control.</text>
</comment>
<comment type="subunit">
    <text evidence="1">Heterodimer of an alpha and a beta chain.</text>
</comment>
<comment type="similarity">
    <text evidence="1">Belongs to the bacterial histone-like protein family.</text>
</comment>
<sequence>MALTKAEMSEYLFDKLGLSKRDAKELVELFFEEIRRALENGEQVKLSGFGNFDLRDKNQRPGRNPKTGEDIPITARRVVTFRPGQKLKSRVENASPKDE</sequence>